<proteinExistence type="inferred from homology"/>
<evidence type="ECO:0000255" key="1">
    <source>
        <dbReference type="HAMAP-Rule" id="MF_01305"/>
    </source>
</evidence>
<dbReference type="EMBL" id="CR954199">
    <property type="protein sequence ID" value="CAL36338.1"/>
    <property type="molecule type" value="Genomic_DNA"/>
</dbReference>
<dbReference type="RefSeq" id="YP_717216.1">
    <property type="nucleotide sequence ID" value="NC_008289.1"/>
</dbReference>
<dbReference type="SMR" id="Q0P3N9"/>
<dbReference type="FunCoup" id="Q0P3N9">
    <property type="interactions" value="34"/>
</dbReference>
<dbReference type="STRING" id="70448.Q0P3N9"/>
<dbReference type="GeneID" id="4238888"/>
<dbReference type="KEGG" id="ota:OstapCp13"/>
<dbReference type="eggNOG" id="ENOG502SBI8">
    <property type="taxonomic scope" value="Eukaryota"/>
</dbReference>
<dbReference type="InParanoid" id="Q0P3N9"/>
<dbReference type="Proteomes" id="UP000009170">
    <property type="component" value="Chloroplast"/>
</dbReference>
<dbReference type="GO" id="GO:0009535">
    <property type="term" value="C:chloroplast thylakoid membrane"/>
    <property type="evidence" value="ECO:0007669"/>
    <property type="project" value="UniProtKB-SubCell"/>
</dbReference>
<dbReference type="GO" id="GO:0009539">
    <property type="term" value="C:photosystem II reaction center"/>
    <property type="evidence" value="ECO:0007669"/>
    <property type="project" value="InterPro"/>
</dbReference>
<dbReference type="GO" id="GO:0015979">
    <property type="term" value="P:photosynthesis"/>
    <property type="evidence" value="ECO:0007669"/>
    <property type="project" value="UniProtKB-UniRule"/>
</dbReference>
<dbReference type="Gene3D" id="6.10.250.2070">
    <property type="match status" value="1"/>
</dbReference>
<dbReference type="HAMAP" id="MF_01305">
    <property type="entry name" value="PSII_PsbJ"/>
    <property type="match status" value="1"/>
</dbReference>
<dbReference type="InterPro" id="IPR002682">
    <property type="entry name" value="PSII_PsbJ"/>
</dbReference>
<dbReference type="InterPro" id="IPR037267">
    <property type="entry name" value="PSII_PsbJ_sf"/>
</dbReference>
<dbReference type="NCBIfam" id="NF002722">
    <property type="entry name" value="PRK02565.1"/>
    <property type="match status" value="1"/>
</dbReference>
<dbReference type="PANTHER" id="PTHR34812">
    <property type="entry name" value="PHOTOSYSTEM II REACTION CENTER PROTEIN J"/>
    <property type="match status" value="1"/>
</dbReference>
<dbReference type="PANTHER" id="PTHR34812:SF3">
    <property type="entry name" value="PHOTOSYSTEM II REACTION CENTER PROTEIN J"/>
    <property type="match status" value="1"/>
</dbReference>
<dbReference type="Pfam" id="PF01788">
    <property type="entry name" value="PsbJ"/>
    <property type="match status" value="1"/>
</dbReference>
<dbReference type="SUPFAM" id="SSF161021">
    <property type="entry name" value="Photosystem II reaction center protein J, PsbJ"/>
    <property type="match status" value="1"/>
</dbReference>
<sequence length="41" mass="4239">MSNTTTGRIPLWFVGMVGGLAALGLLAIFFYGSYVGLGSSL</sequence>
<gene>
    <name evidence="1" type="primary">psbJ</name>
    <name type="ordered locus">OtCpg00130</name>
</gene>
<name>PSBJ_OSTTA</name>
<organism>
    <name type="scientific">Ostreococcus tauri</name>
    <dbReference type="NCBI Taxonomy" id="70448"/>
    <lineage>
        <taxon>Eukaryota</taxon>
        <taxon>Viridiplantae</taxon>
        <taxon>Chlorophyta</taxon>
        <taxon>Mamiellophyceae</taxon>
        <taxon>Mamiellales</taxon>
        <taxon>Bathycoccaceae</taxon>
        <taxon>Ostreococcus</taxon>
    </lineage>
</organism>
<accession>Q0P3N9</accession>
<comment type="function">
    <text evidence="1">One of the components of the core complex of photosystem II (PSII). PSII is a light-driven water:plastoquinone oxidoreductase that uses light energy to abstract electrons from H(2)O, generating O(2) and a proton gradient subsequently used for ATP formation. It consists of a core antenna complex that captures photons, and an electron transfer chain that converts photonic excitation into a charge separation.</text>
</comment>
<comment type="subunit">
    <text evidence="1">PSII is composed of 1 copy each of membrane proteins PsbA, PsbB, PsbC, PsbD, PsbE, PsbF, PsbH, PsbI, PsbJ, PsbK, PsbL, PsbM, PsbT, PsbX, PsbY, PsbZ, Psb30/Ycf12, at least 3 peripheral proteins of the oxygen-evolving complex and a large number of cofactors. It forms dimeric complexes.</text>
</comment>
<comment type="subcellular location">
    <subcellularLocation>
        <location evidence="1">Plastid</location>
        <location evidence="1">Chloroplast thylakoid membrane</location>
        <topology evidence="1">Single-pass membrane protein</topology>
    </subcellularLocation>
</comment>
<comment type="similarity">
    <text evidence="1">Belongs to the PsbJ family.</text>
</comment>
<keyword id="KW-0150">Chloroplast</keyword>
<keyword id="KW-0472">Membrane</keyword>
<keyword id="KW-0602">Photosynthesis</keyword>
<keyword id="KW-0604">Photosystem II</keyword>
<keyword id="KW-0934">Plastid</keyword>
<keyword id="KW-0674">Reaction center</keyword>
<keyword id="KW-1185">Reference proteome</keyword>
<keyword id="KW-0793">Thylakoid</keyword>
<keyword id="KW-0812">Transmembrane</keyword>
<keyword id="KW-1133">Transmembrane helix</keyword>
<protein>
    <recommendedName>
        <fullName evidence="1">Photosystem II reaction center protein J</fullName>
        <shortName evidence="1">PSII-J</shortName>
    </recommendedName>
</protein>
<feature type="chain" id="PRO_0000276106" description="Photosystem II reaction center protein J">
    <location>
        <begin position="1"/>
        <end position="41"/>
    </location>
</feature>
<feature type="transmembrane region" description="Helical" evidence="1">
    <location>
        <begin position="9"/>
        <end position="29"/>
    </location>
</feature>
<geneLocation type="chloroplast"/>
<reference key="1">
    <citation type="journal article" date="2007" name="Mol. Biol. Evol.">
        <title>The complete chloroplast and mitochondrial DNA sequence of Ostreococcus tauri: organelle genomes of the smallest eukaryote are examples of compaction.</title>
        <authorList>
            <person name="Robbens S."/>
            <person name="Derelle E."/>
            <person name="Ferraz C."/>
            <person name="Wuyts J."/>
            <person name="Moreau H."/>
            <person name="Van de Peer Y."/>
        </authorList>
    </citation>
    <scope>NUCLEOTIDE SEQUENCE [LARGE SCALE GENOMIC DNA]</scope>
    <source>
        <strain>OTTH0595</strain>
    </source>
</reference>